<comment type="function">
    <text>May play a role in the molecular organization of synapses and neuronal cell signaling. Could be an adapter protein linking ion channel to the subsynaptic cytoskeleton. May induce enrichment of PSD-95/SAP90 at the plasma membrane.</text>
</comment>
<comment type="subunit">
    <text evidence="1">Interacts with DLG4/PSD-95.</text>
</comment>
<comment type="subcellular location">
    <subcellularLocation>
        <location evidence="4">Cell membrane</location>
        <topology evidence="4">Peripheral membrane protein</topology>
    </subcellularLocation>
    <subcellularLocation>
        <location evidence="4">Postsynaptic density</location>
    </subcellularLocation>
    <subcellularLocation>
        <location evidence="4">Synapse</location>
    </subcellularLocation>
    <text>Postsynaptic density of neuronal cells.</text>
</comment>
<comment type="tissue specificity">
    <text evidence="4">Highly expressed in central and peripherical nervous system (at protein level).</text>
</comment>
<comment type="similarity">
    <text evidence="5">Belongs to the SAPAP family.</text>
</comment>
<keyword id="KW-0002">3D-structure</keyword>
<keyword id="KW-1003">Cell membrane</keyword>
<keyword id="KW-0472">Membrane</keyword>
<keyword id="KW-0597">Phosphoprotein</keyword>
<keyword id="KW-1185">Reference proteome</keyword>
<keyword id="KW-0770">Synapse</keyword>
<dbReference type="EMBL" id="AY243848">
    <property type="protein sequence ID" value="AAO89219.2"/>
    <property type="molecule type" value="mRNA"/>
</dbReference>
<dbReference type="EMBL" id="BC057615">
    <property type="protein sequence ID" value="AAH57615.1"/>
    <property type="molecule type" value="mRNA"/>
</dbReference>
<dbReference type="EMBL" id="BC058433">
    <property type="protein sequence ID" value="AAH58433.1"/>
    <property type="molecule type" value="mRNA"/>
</dbReference>
<dbReference type="CCDS" id="CCDS18665.1"/>
<dbReference type="RefSeq" id="NP_001289010.1">
    <property type="nucleotide sequence ID" value="NM_001302081.2"/>
</dbReference>
<dbReference type="RefSeq" id="NP_001413220.1">
    <property type="nucleotide sequence ID" value="NM_001426291.1"/>
</dbReference>
<dbReference type="RefSeq" id="NP_001413221.1">
    <property type="nucleotide sequence ID" value="NM_001426292.1"/>
</dbReference>
<dbReference type="RefSeq" id="NP_941020.1">
    <property type="nucleotide sequence ID" value="NM_198618.6"/>
</dbReference>
<dbReference type="RefSeq" id="XP_011238839.1">
    <property type="nucleotide sequence ID" value="XM_011240537.3"/>
</dbReference>
<dbReference type="RefSeq" id="XP_036020023.1">
    <property type="nucleotide sequence ID" value="XM_036164130.1"/>
</dbReference>
<dbReference type="PDB" id="5IZU">
    <property type="method" value="X-ray"/>
    <property type="resolution" value="2.49 A"/>
    <property type="chains" value="B/D=963-977"/>
</dbReference>
<dbReference type="PDBsum" id="5IZU"/>
<dbReference type="SMR" id="Q6PFD5"/>
<dbReference type="BioGRID" id="232440">
    <property type="interactions" value="19"/>
</dbReference>
<dbReference type="FunCoup" id="Q6PFD5">
    <property type="interactions" value="340"/>
</dbReference>
<dbReference type="IntAct" id="Q6PFD5">
    <property type="interactions" value="8"/>
</dbReference>
<dbReference type="MINT" id="Q6PFD5"/>
<dbReference type="STRING" id="10090.ENSMUSP00000101700"/>
<dbReference type="GlyGen" id="Q6PFD5">
    <property type="glycosylation" value="7 sites, 1 N-linked glycan (1 site), 1 O-linked glycan (5 sites)"/>
</dbReference>
<dbReference type="iPTMnet" id="Q6PFD5"/>
<dbReference type="PhosphoSitePlus" id="Q6PFD5"/>
<dbReference type="SwissPalm" id="Q6PFD5"/>
<dbReference type="PaxDb" id="10090-ENSMUSP00000101700"/>
<dbReference type="ProteomicsDB" id="277464"/>
<dbReference type="ABCD" id="Q6PFD5">
    <property type="antibodies" value="1 sequenced antibody"/>
</dbReference>
<dbReference type="Antibodypedia" id="17231">
    <property type="antibodies" value="128 antibodies from 29 providers"/>
</dbReference>
<dbReference type="DNASU" id="242667"/>
<dbReference type="Ensembl" id="ENSMUST00000046659.14">
    <property type="protein sequence ID" value="ENSMUSP00000039724.8"/>
    <property type="gene ID" value="ENSMUSG00000042388.15"/>
</dbReference>
<dbReference type="Ensembl" id="ENSMUST00000106094.9">
    <property type="protein sequence ID" value="ENSMUSP00000101700.3"/>
    <property type="gene ID" value="ENSMUSG00000042388.15"/>
</dbReference>
<dbReference type="GeneID" id="242667"/>
<dbReference type="KEGG" id="mmu:242667"/>
<dbReference type="UCSC" id="uc008uuo.3">
    <property type="organism name" value="mouse"/>
</dbReference>
<dbReference type="AGR" id="MGI:3039563"/>
<dbReference type="CTD" id="58512"/>
<dbReference type="MGI" id="MGI:3039563">
    <property type="gene designation" value="Dlgap3"/>
</dbReference>
<dbReference type="VEuPathDB" id="HostDB:ENSMUSG00000042388"/>
<dbReference type="eggNOG" id="KOG3971">
    <property type="taxonomic scope" value="Eukaryota"/>
</dbReference>
<dbReference type="GeneTree" id="ENSGT00940000159513"/>
<dbReference type="HOGENOM" id="CLU_010880_0_0_1"/>
<dbReference type="InParanoid" id="Q6PFD5"/>
<dbReference type="OMA" id="DCVGHPP"/>
<dbReference type="OrthoDB" id="10036956at2759"/>
<dbReference type="PhylomeDB" id="Q6PFD5"/>
<dbReference type="TreeFam" id="TF321382"/>
<dbReference type="Reactome" id="R-MMU-6794361">
    <property type="pathway name" value="Neurexins and neuroligins"/>
</dbReference>
<dbReference type="BioGRID-ORCS" id="242667">
    <property type="hits" value="7 hits in 76 CRISPR screens"/>
</dbReference>
<dbReference type="CD-CODE" id="CE726F99">
    <property type="entry name" value="Postsynaptic density"/>
</dbReference>
<dbReference type="ChiTaRS" id="Dap3">
    <property type="organism name" value="mouse"/>
</dbReference>
<dbReference type="EvolutionaryTrace" id="Q6PFD5"/>
<dbReference type="PRO" id="PR:Q6PFD5"/>
<dbReference type="Proteomes" id="UP000000589">
    <property type="component" value="Chromosome 4"/>
</dbReference>
<dbReference type="RNAct" id="Q6PFD5">
    <property type="molecule type" value="protein"/>
</dbReference>
<dbReference type="Bgee" id="ENSMUSG00000042388">
    <property type="expression patterns" value="Expressed in superior frontal gyrus and 76 other cell types or tissues"/>
</dbReference>
<dbReference type="ExpressionAtlas" id="Q6PFD5">
    <property type="expression patterns" value="baseline and differential"/>
</dbReference>
<dbReference type="GO" id="GO:0098981">
    <property type="term" value="C:cholinergic synapse"/>
    <property type="evidence" value="ECO:0000314"/>
    <property type="project" value="SynGO"/>
</dbReference>
<dbReference type="GO" id="GO:0098978">
    <property type="term" value="C:glutamatergic synapse"/>
    <property type="evidence" value="ECO:0000314"/>
    <property type="project" value="SynGO"/>
</dbReference>
<dbReference type="GO" id="GO:0031594">
    <property type="term" value="C:neuromuscular junction"/>
    <property type="evidence" value="ECO:0000314"/>
    <property type="project" value="SynGO"/>
</dbReference>
<dbReference type="GO" id="GO:0005886">
    <property type="term" value="C:plasma membrane"/>
    <property type="evidence" value="ECO:0007669"/>
    <property type="project" value="UniProtKB-SubCell"/>
</dbReference>
<dbReference type="GO" id="GO:0014069">
    <property type="term" value="C:postsynaptic density"/>
    <property type="evidence" value="ECO:0007669"/>
    <property type="project" value="UniProtKB-SubCell"/>
</dbReference>
<dbReference type="GO" id="GO:0099572">
    <property type="term" value="C:postsynaptic specialization"/>
    <property type="evidence" value="ECO:0000314"/>
    <property type="project" value="SynGO"/>
</dbReference>
<dbReference type="GO" id="GO:0045202">
    <property type="term" value="C:synapse"/>
    <property type="evidence" value="ECO:0000314"/>
    <property type="project" value="MGI"/>
</dbReference>
<dbReference type="GO" id="GO:0001540">
    <property type="term" value="F:amyloid-beta binding"/>
    <property type="evidence" value="ECO:0000314"/>
    <property type="project" value="MGI"/>
</dbReference>
<dbReference type="GO" id="GO:0099010">
    <property type="term" value="P:modification of postsynaptic structure"/>
    <property type="evidence" value="ECO:0000314"/>
    <property type="project" value="SynGO"/>
</dbReference>
<dbReference type="GO" id="GO:0050804">
    <property type="term" value="P:modulation of chemical synaptic transmission"/>
    <property type="evidence" value="ECO:0000314"/>
    <property type="project" value="SynGO"/>
</dbReference>
<dbReference type="GO" id="GO:0023052">
    <property type="term" value="P:signaling"/>
    <property type="evidence" value="ECO:0007669"/>
    <property type="project" value="InterPro"/>
</dbReference>
<dbReference type="InterPro" id="IPR005026">
    <property type="entry name" value="SAPAP"/>
</dbReference>
<dbReference type="PANTHER" id="PTHR12353:SF4">
    <property type="entry name" value="DISKS LARGE-ASSOCIATED PROTEIN 3"/>
    <property type="match status" value="1"/>
</dbReference>
<dbReference type="PANTHER" id="PTHR12353">
    <property type="entry name" value="DISKS LARGE-ASSOCIATED PROTEIN DAP SAP90/PSD-95-ASSOCIATED PROTEIN"/>
    <property type="match status" value="1"/>
</dbReference>
<dbReference type="Pfam" id="PF03359">
    <property type="entry name" value="GKAP"/>
    <property type="match status" value="1"/>
</dbReference>
<sequence length="977" mass="105873">MRGYHGDRGSHPRPARFADQQHMDVGPAARAPYLLGSREAFSTEPRFCAPRAGLGHLSPEGPLSLSEGPSSVGPEGGPGGVGAGGGSSTFPRMYPGQGPFDTCEDCVGHPQGKGATRLPPTLLDQFEKQLPVQQDGFHTLPYQRGPAGPGPGPGSGAAPEARSESPSRIRHLVHSVQKLFAKSHSLEAPGKRDYNGPKADGRGSSGGDSYSGPGSGGTPTSHHHHHHHHHHHHQSRHGKRSKSKDRKGDGRHQTKATGWWSSDDNLDSDSGFLGGRPPGEPGGPFCLDAPDGSYRDLSFKGRSGGSEGRCLACTGMSMSLDGQSVKRSAWHTMMVSQGRDGYPGAGPGKGLLGPETKAKARTYHYLQVPQDDWGGYPTGGKDGEIPCRRMRSGSYIKAMGDEESGDSDGSPKTSPKALARRFASRRSSSVDTARINCCVPPRIHPRSSIPGYSRSLTTGQLSEEFNQQLEAVCGSVFGELESQAVDALDLPGCFRMRSHSYLRAIQAGCSQDDDCLPLLAAPASVSGRPGSSFNFRKAPPPIPPGSQAPPRISITAQSSTDSAHESFTAAEGPARRCSSADGLDGPTMGARTLELAPVPPRASPKPPTLIIKTIPGREELRSLARQRKWRPSIGVQVETISDSDTENRSRREFHSIGVQVEEDKRRARFKRSNSVTAGVQADLELEGLAGLATVATEDKALQFGRSFQRHASEPQPGPRAPTYSVFRTVHTQGQWAYREGYPLPYEPPATDGSPGPTPVPAPGPGSGRRDSWMERGSRSLPDSGRTSPCPRDGEWFIKMLRAEVEKLEHWCQQMEREAEDYELPEEILEKIRSAVGSTQLLLSQKVQQFFRLCQQSLDPTAFPVPTFQDLAGFWDLLQLSIEDVTLKFLELQQLKANSWKLLEPKEEKKVPPPIPKKPSRGRGVPVKERSLDSVDRQRQEARKRLLAAKRAASFRHSSATESADSIEIYIPEAQTRL</sequence>
<evidence type="ECO:0000250" key="1"/>
<evidence type="ECO:0000250" key="2">
    <source>
        <dbReference type="UniProtKB" id="P97838"/>
    </source>
</evidence>
<evidence type="ECO:0000256" key="3">
    <source>
        <dbReference type="SAM" id="MobiDB-lite"/>
    </source>
</evidence>
<evidence type="ECO:0000269" key="4">
    <source>
    </source>
</evidence>
<evidence type="ECO:0000305" key="5"/>
<evidence type="ECO:0007744" key="6">
    <source>
    </source>
</evidence>
<evidence type="ECO:0007744" key="7">
    <source>
    </source>
</evidence>
<evidence type="ECO:0007829" key="8">
    <source>
        <dbReference type="PDB" id="5IZU"/>
    </source>
</evidence>
<organism>
    <name type="scientific">Mus musculus</name>
    <name type="common">Mouse</name>
    <dbReference type="NCBI Taxonomy" id="10090"/>
    <lineage>
        <taxon>Eukaryota</taxon>
        <taxon>Metazoa</taxon>
        <taxon>Chordata</taxon>
        <taxon>Craniata</taxon>
        <taxon>Vertebrata</taxon>
        <taxon>Euteleostomi</taxon>
        <taxon>Mammalia</taxon>
        <taxon>Eutheria</taxon>
        <taxon>Euarchontoglires</taxon>
        <taxon>Glires</taxon>
        <taxon>Rodentia</taxon>
        <taxon>Myomorpha</taxon>
        <taxon>Muroidea</taxon>
        <taxon>Muridae</taxon>
        <taxon>Murinae</taxon>
        <taxon>Mus</taxon>
        <taxon>Mus</taxon>
    </lineage>
</organism>
<feature type="chain" id="PRO_0000174295" description="Disks large-associated protein 3">
    <location>
        <begin position="1"/>
        <end position="977"/>
    </location>
</feature>
<feature type="region of interest" description="Disordered" evidence="3">
    <location>
        <begin position="1"/>
        <end position="24"/>
    </location>
</feature>
<feature type="region of interest" description="Disordered" evidence="3">
    <location>
        <begin position="52"/>
        <end position="96"/>
    </location>
</feature>
<feature type="region of interest" description="Disordered" evidence="3">
    <location>
        <begin position="137"/>
        <end position="167"/>
    </location>
</feature>
<feature type="region of interest" description="Disordered" evidence="3">
    <location>
        <begin position="181"/>
        <end position="289"/>
    </location>
</feature>
<feature type="region of interest" description="Disordered" evidence="3">
    <location>
        <begin position="398"/>
        <end position="417"/>
    </location>
</feature>
<feature type="region of interest" description="Disordered" evidence="3">
    <location>
        <begin position="529"/>
        <end position="582"/>
    </location>
</feature>
<feature type="region of interest" description="Disordered" evidence="3">
    <location>
        <begin position="739"/>
        <end position="788"/>
    </location>
</feature>
<feature type="region of interest" description="Disordered" evidence="3">
    <location>
        <begin position="906"/>
        <end position="939"/>
    </location>
</feature>
<feature type="compositionally biased region" description="Basic and acidic residues" evidence="3">
    <location>
        <begin position="1"/>
        <end position="10"/>
    </location>
</feature>
<feature type="compositionally biased region" description="Low complexity" evidence="3">
    <location>
        <begin position="53"/>
        <end position="73"/>
    </location>
</feature>
<feature type="compositionally biased region" description="Gly residues" evidence="3">
    <location>
        <begin position="74"/>
        <end position="87"/>
    </location>
</feature>
<feature type="compositionally biased region" description="Basic and acidic residues" evidence="3">
    <location>
        <begin position="189"/>
        <end position="201"/>
    </location>
</feature>
<feature type="compositionally biased region" description="Basic residues" evidence="3">
    <location>
        <begin position="221"/>
        <end position="245"/>
    </location>
</feature>
<feature type="compositionally biased region" description="Low complexity" evidence="3">
    <location>
        <begin position="258"/>
        <end position="271"/>
    </location>
</feature>
<feature type="compositionally biased region" description="Pro residues" evidence="3">
    <location>
        <begin position="538"/>
        <end position="547"/>
    </location>
</feature>
<feature type="compositionally biased region" description="Basic and acidic residues" evidence="3">
    <location>
        <begin position="767"/>
        <end position="777"/>
    </location>
</feature>
<feature type="compositionally biased region" description="Basic and acidic residues" evidence="3">
    <location>
        <begin position="925"/>
        <end position="939"/>
    </location>
</feature>
<feature type="modified residue" description="Phosphoserine" evidence="6">
    <location>
        <position position="58"/>
    </location>
</feature>
<feature type="modified residue" description="Phosphoserine" evidence="7">
    <location>
        <position position="404"/>
    </location>
</feature>
<feature type="modified residue" description="Phosphoserine" evidence="7">
    <location>
        <position position="407"/>
    </location>
</feature>
<feature type="modified residue" description="Phosphoserine" evidence="7">
    <location>
        <position position="410"/>
    </location>
</feature>
<feature type="modified residue" description="Phosphoserine" evidence="7">
    <location>
        <position position="414"/>
    </location>
</feature>
<feature type="modified residue" description="Phosphoserine" evidence="7">
    <location>
        <position position="641"/>
    </location>
</feature>
<feature type="modified residue" description="Phosphoserine" evidence="7">
    <location>
        <position position="643"/>
    </location>
</feature>
<feature type="modified residue" description="Phosphoserine" evidence="2">
    <location>
        <position position="930"/>
    </location>
</feature>
<feature type="modified residue" description="Phosphoserine" evidence="2">
    <location>
        <position position="933"/>
    </location>
</feature>
<feature type="modified residue" description="Phosphoserine" evidence="6">
    <location>
        <position position="965"/>
    </location>
</feature>
<feature type="sequence conflict" description="In Ref. 1; AAO89219." evidence="5" ref="1">
    <original>N</original>
    <variation>S</variation>
    <location>
        <position position="436"/>
    </location>
</feature>
<feature type="strand" evidence="8">
    <location>
        <begin position="964"/>
        <end position="977"/>
    </location>
</feature>
<proteinExistence type="evidence at protein level"/>
<name>DLGP3_MOUSE</name>
<protein>
    <recommendedName>
        <fullName>Disks large-associated protein 3</fullName>
        <shortName>DAP-3</shortName>
    </recommendedName>
    <alternativeName>
        <fullName>PSD-95/SAP90-binding protein 3</fullName>
    </alternativeName>
    <alternativeName>
        <fullName>SAP90/PSD-95-associated protein 3</fullName>
        <shortName>SAPAP3</shortName>
    </alternativeName>
</protein>
<reference key="1">
    <citation type="journal article" date="2004" name="J. Comp. Neurol.">
        <title>Differential mRNA expression and protein localization of the SAP90/PSD-95-associated proteins (SAPAPs) in the nervous system of the mouse.</title>
        <authorList>
            <person name="Welch J.M."/>
            <person name="Wang D."/>
            <person name="Feng G."/>
        </authorList>
    </citation>
    <scope>NUCLEOTIDE SEQUENCE [MRNA]</scope>
    <scope>TISSUE SPECIFICITY</scope>
    <scope>SUBCELLULAR LOCATION</scope>
    <source>
        <strain>ICR</strain>
    </source>
</reference>
<reference key="2">
    <citation type="journal article" date="2004" name="Genome Res.">
        <title>The status, quality, and expansion of the NIH full-length cDNA project: the Mammalian Gene Collection (MGC).</title>
        <authorList>
            <consortium name="The MGC Project Team"/>
        </authorList>
    </citation>
    <scope>NUCLEOTIDE SEQUENCE [LARGE SCALE MRNA]</scope>
    <source>
        <strain>C57BL/6J</strain>
    </source>
</reference>
<reference key="3">
    <citation type="journal article" date="2006" name="Mol. Cell. Proteomics">
        <title>Comprehensive identification of phosphorylation sites in postsynaptic density preparations.</title>
        <authorList>
            <person name="Trinidad J.C."/>
            <person name="Specht C.G."/>
            <person name="Thalhammer A."/>
            <person name="Schoepfer R."/>
            <person name="Burlingame A.L."/>
        </authorList>
    </citation>
    <scope>PHOSPHORYLATION [LARGE SCALE ANALYSIS] AT SER-58 AND SER-965</scope>
    <scope>IDENTIFICATION BY MASS SPECTROMETRY [LARGE SCALE ANALYSIS]</scope>
    <source>
        <tissue>Brain</tissue>
    </source>
</reference>
<reference key="4">
    <citation type="journal article" date="2010" name="Cell">
        <title>A tissue-specific atlas of mouse protein phosphorylation and expression.</title>
        <authorList>
            <person name="Huttlin E.L."/>
            <person name="Jedrychowski M.P."/>
            <person name="Elias J.E."/>
            <person name="Goswami T."/>
            <person name="Rad R."/>
            <person name="Beausoleil S.A."/>
            <person name="Villen J."/>
            <person name="Haas W."/>
            <person name="Sowa M.E."/>
            <person name="Gygi S.P."/>
        </authorList>
    </citation>
    <scope>PHOSPHORYLATION [LARGE SCALE ANALYSIS] AT SER-404; SER-407; SER-410; SER-414; SER-641 AND SER-643</scope>
    <scope>IDENTIFICATION BY MASS SPECTROMETRY [LARGE SCALE ANALYSIS]</scope>
    <source>
        <tissue>Brain</tissue>
    </source>
</reference>
<accession>Q6PFD5</accession>
<accession>Q6PDX0</accession>
<accession>Q6XBF2</accession>
<gene>
    <name type="primary">Dlgap3</name>
    <name type="synonym">Dap3</name>
</gene>